<sequence length="438" mass="47853">MSTATMPYVAFKVKDISLAAWGRKEIELAEAEMPGLMALRAEYKNEQPLAGARIAGCLHMTIQTAVLIETLIALGAEVTWSSCNIFSTQDQAAAAIAAAGIQVYAWKGLNEPDFDWCIEQTLFFGEDRKPLNMILDDGGDLTNMVIDRYPHLVEGIKGLSEETTTGVHRLYERVKAGTLPMPAINVNDSVTKSKFDNKYGCKESAVDAVRRATDIMLAGKRVVVCGYGDVGKGTAASFRGAGSIVTVTEIDPICALQAAMDGFEVKKLNTVVGNADIIITTTGNKDIVLGSHFEQMKDKTIVCNIGHFDNEIDMAWLNKNHGASKIEIKPQVDKYTIAGKDILILAEGRLVNLGCATGHPSFVMSNSFTNQTLAQIELWKNSAAYNNDVYMLPKHLDEKVAFLHLAKLGVELEVLRDDQAAYIGVGVDGPFKPEYYRY</sequence>
<name>SAHH_FLAPJ</name>
<protein>
    <recommendedName>
        <fullName evidence="1">Adenosylhomocysteinase</fullName>
        <ecNumber evidence="1">3.13.2.1</ecNumber>
    </recommendedName>
    <alternativeName>
        <fullName evidence="1">S-adenosyl-L-homocysteine hydrolase</fullName>
        <shortName evidence="1">AdoHcyase</shortName>
    </alternativeName>
</protein>
<accession>A6GW32</accession>
<reference key="1">
    <citation type="journal article" date="2007" name="Nat. Biotechnol.">
        <title>Complete genome sequence of the fish pathogen Flavobacterium psychrophilum.</title>
        <authorList>
            <person name="Duchaud E."/>
            <person name="Boussaha M."/>
            <person name="Loux V."/>
            <person name="Bernardet J.-F."/>
            <person name="Michel C."/>
            <person name="Kerouault B."/>
            <person name="Mondot S."/>
            <person name="Nicolas P."/>
            <person name="Bossy R."/>
            <person name="Caron C."/>
            <person name="Bessieres P."/>
            <person name="Gibrat J.-F."/>
            <person name="Claverol S."/>
            <person name="Dumetz F."/>
            <person name="Le Henaff M."/>
            <person name="Benmansour A."/>
        </authorList>
    </citation>
    <scope>NUCLEOTIDE SEQUENCE [LARGE SCALE GENOMIC DNA]</scope>
    <source>
        <strain>ATCC 49511 / DSM 21280 / CIP 103535 / JIP02/86</strain>
    </source>
</reference>
<feature type="chain" id="PRO_1000024726" description="Adenosylhomocysteinase">
    <location>
        <begin position="1"/>
        <end position="438"/>
    </location>
</feature>
<feature type="binding site" evidence="1">
    <location>
        <position position="61"/>
    </location>
    <ligand>
        <name>substrate</name>
    </ligand>
</feature>
<feature type="binding site" evidence="1">
    <location>
        <position position="137"/>
    </location>
    <ligand>
        <name>substrate</name>
    </ligand>
</feature>
<feature type="binding site" evidence="1">
    <location>
        <position position="162"/>
    </location>
    <ligand>
        <name>substrate</name>
    </ligand>
</feature>
<feature type="binding site" evidence="1">
    <location>
        <begin position="163"/>
        <end position="165"/>
    </location>
    <ligand>
        <name>NAD(+)</name>
        <dbReference type="ChEBI" id="CHEBI:57540"/>
    </ligand>
</feature>
<feature type="binding site" evidence="1">
    <location>
        <position position="192"/>
    </location>
    <ligand>
        <name>substrate</name>
    </ligand>
</feature>
<feature type="binding site" evidence="1">
    <location>
        <position position="196"/>
    </location>
    <ligand>
        <name>substrate</name>
    </ligand>
</feature>
<feature type="binding site" evidence="1">
    <location>
        <position position="197"/>
    </location>
    <ligand>
        <name>NAD(+)</name>
        <dbReference type="ChEBI" id="CHEBI:57540"/>
    </ligand>
</feature>
<feature type="binding site" evidence="1">
    <location>
        <begin position="226"/>
        <end position="231"/>
    </location>
    <ligand>
        <name>NAD(+)</name>
        <dbReference type="ChEBI" id="CHEBI:57540"/>
    </ligand>
</feature>
<feature type="binding site" evidence="1">
    <location>
        <position position="249"/>
    </location>
    <ligand>
        <name>NAD(+)</name>
        <dbReference type="ChEBI" id="CHEBI:57540"/>
    </ligand>
</feature>
<feature type="binding site" evidence="1">
    <location>
        <position position="284"/>
    </location>
    <ligand>
        <name>NAD(+)</name>
        <dbReference type="ChEBI" id="CHEBI:57540"/>
    </ligand>
</feature>
<feature type="binding site" evidence="1">
    <location>
        <begin position="305"/>
        <end position="307"/>
    </location>
    <ligand>
        <name>NAD(+)</name>
        <dbReference type="ChEBI" id="CHEBI:57540"/>
    </ligand>
</feature>
<feature type="binding site" evidence="1">
    <location>
        <position position="352"/>
    </location>
    <ligand>
        <name>NAD(+)</name>
        <dbReference type="ChEBI" id="CHEBI:57540"/>
    </ligand>
</feature>
<evidence type="ECO:0000255" key="1">
    <source>
        <dbReference type="HAMAP-Rule" id="MF_00563"/>
    </source>
</evidence>
<dbReference type="EC" id="3.13.2.1" evidence="1"/>
<dbReference type="EMBL" id="AM398681">
    <property type="protein sequence ID" value="CAL42305.1"/>
    <property type="molecule type" value="Genomic_DNA"/>
</dbReference>
<dbReference type="RefSeq" id="WP_011962366.1">
    <property type="nucleotide sequence ID" value="NC_009613.3"/>
</dbReference>
<dbReference type="RefSeq" id="YP_001295125.1">
    <property type="nucleotide sequence ID" value="NC_009613.3"/>
</dbReference>
<dbReference type="SMR" id="A6GW32"/>
<dbReference type="STRING" id="402612.FP0189"/>
<dbReference type="EnsemblBacteria" id="CAL42305">
    <property type="protein sequence ID" value="CAL42305"/>
    <property type="gene ID" value="FP0189"/>
</dbReference>
<dbReference type="GeneID" id="66553817"/>
<dbReference type="KEGG" id="fps:FP0189"/>
<dbReference type="PATRIC" id="fig|402612.5.peg.197"/>
<dbReference type="eggNOG" id="COG0499">
    <property type="taxonomic scope" value="Bacteria"/>
</dbReference>
<dbReference type="HOGENOM" id="CLU_025194_2_1_10"/>
<dbReference type="OrthoDB" id="9802717at2"/>
<dbReference type="UniPathway" id="UPA00314">
    <property type="reaction ID" value="UER00076"/>
</dbReference>
<dbReference type="Proteomes" id="UP000006394">
    <property type="component" value="Chromosome"/>
</dbReference>
<dbReference type="GO" id="GO:0005829">
    <property type="term" value="C:cytosol"/>
    <property type="evidence" value="ECO:0007669"/>
    <property type="project" value="TreeGrafter"/>
</dbReference>
<dbReference type="GO" id="GO:0004013">
    <property type="term" value="F:adenosylhomocysteinase activity"/>
    <property type="evidence" value="ECO:0007669"/>
    <property type="project" value="UniProtKB-UniRule"/>
</dbReference>
<dbReference type="GO" id="GO:0071269">
    <property type="term" value="P:L-homocysteine biosynthetic process"/>
    <property type="evidence" value="ECO:0007669"/>
    <property type="project" value="UniProtKB-UniRule"/>
</dbReference>
<dbReference type="GO" id="GO:0006730">
    <property type="term" value="P:one-carbon metabolic process"/>
    <property type="evidence" value="ECO:0007669"/>
    <property type="project" value="UniProtKB-KW"/>
</dbReference>
<dbReference type="GO" id="GO:0033353">
    <property type="term" value="P:S-adenosylmethionine cycle"/>
    <property type="evidence" value="ECO:0007669"/>
    <property type="project" value="TreeGrafter"/>
</dbReference>
<dbReference type="CDD" id="cd00401">
    <property type="entry name" value="SAHH"/>
    <property type="match status" value="1"/>
</dbReference>
<dbReference type="FunFam" id="3.40.50.1480:FF:000004">
    <property type="entry name" value="Adenosylhomocysteinase"/>
    <property type="match status" value="1"/>
</dbReference>
<dbReference type="FunFam" id="3.40.50.720:FF:000004">
    <property type="entry name" value="Adenosylhomocysteinase"/>
    <property type="match status" value="1"/>
</dbReference>
<dbReference type="Gene3D" id="3.40.50.1480">
    <property type="entry name" value="Adenosylhomocysteinase-like"/>
    <property type="match status" value="3"/>
</dbReference>
<dbReference type="Gene3D" id="3.40.50.720">
    <property type="entry name" value="NAD(P)-binding Rossmann-like Domain"/>
    <property type="match status" value="1"/>
</dbReference>
<dbReference type="HAMAP" id="MF_00563">
    <property type="entry name" value="AdoHcyase"/>
    <property type="match status" value="1"/>
</dbReference>
<dbReference type="InterPro" id="IPR042172">
    <property type="entry name" value="Adenosylhomocyst_ase-like_sf"/>
</dbReference>
<dbReference type="InterPro" id="IPR000043">
    <property type="entry name" value="Adenosylhomocysteinase-like"/>
</dbReference>
<dbReference type="InterPro" id="IPR015878">
    <property type="entry name" value="Ado_hCys_hydrolase_NAD-bd"/>
</dbReference>
<dbReference type="InterPro" id="IPR036291">
    <property type="entry name" value="NAD(P)-bd_dom_sf"/>
</dbReference>
<dbReference type="InterPro" id="IPR020082">
    <property type="entry name" value="S-Ado-L-homoCys_hydrolase_CS"/>
</dbReference>
<dbReference type="NCBIfam" id="TIGR00936">
    <property type="entry name" value="ahcY"/>
    <property type="match status" value="1"/>
</dbReference>
<dbReference type="NCBIfam" id="NF004005">
    <property type="entry name" value="PRK05476.2-3"/>
    <property type="match status" value="1"/>
</dbReference>
<dbReference type="PANTHER" id="PTHR23420">
    <property type="entry name" value="ADENOSYLHOMOCYSTEINASE"/>
    <property type="match status" value="1"/>
</dbReference>
<dbReference type="PANTHER" id="PTHR23420:SF0">
    <property type="entry name" value="ADENOSYLHOMOCYSTEINASE"/>
    <property type="match status" value="1"/>
</dbReference>
<dbReference type="Pfam" id="PF05221">
    <property type="entry name" value="AdoHcyase"/>
    <property type="match status" value="2"/>
</dbReference>
<dbReference type="Pfam" id="PF00670">
    <property type="entry name" value="AdoHcyase_NAD"/>
    <property type="match status" value="1"/>
</dbReference>
<dbReference type="PIRSF" id="PIRSF001109">
    <property type="entry name" value="Ad_hcy_hydrolase"/>
    <property type="match status" value="1"/>
</dbReference>
<dbReference type="SMART" id="SM00996">
    <property type="entry name" value="AdoHcyase"/>
    <property type="match status" value="1"/>
</dbReference>
<dbReference type="SMART" id="SM00997">
    <property type="entry name" value="AdoHcyase_NAD"/>
    <property type="match status" value="1"/>
</dbReference>
<dbReference type="SUPFAM" id="SSF52283">
    <property type="entry name" value="Formate/glycerate dehydrogenase catalytic domain-like"/>
    <property type="match status" value="1"/>
</dbReference>
<dbReference type="SUPFAM" id="SSF51735">
    <property type="entry name" value="NAD(P)-binding Rossmann-fold domains"/>
    <property type="match status" value="1"/>
</dbReference>
<dbReference type="PROSITE" id="PS00738">
    <property type="entry name" value="ADOHCYASE_1"/>
    <property type="match status" value="1"/>
</dbReference>
<dbReference type="PROSITE" id="PS00739">
    <property type="entry name" value="ADOHCYASE_2"/>
    <property type="match status" value="1"/>
</dbReference>
<keyword id="KW-0963">Cytoplasm</keyword>
<keyword id="KW-0378">Hydrolase</keyword>
<keyword id="KW-0520">NAD</keyword>
<keyword id="KW-0554">One-carbon metabolism</keyword>
<keyword id="KW-1185">Reference proteome</keyword>
<comment type="function">
    <text evidence="1">May play a key role in the regulation of the intracellular concentration of adenosylhomocysteine.</text>
</comment>
<comment type="catalytic activity">
    <reaction evidence="1">
        <text>S-adenosyl-L-homocysteine + H2O = L-homocysteine + adenosine</text>
        <dbReference type="Rhea" id="RHEA:21708"/>
        <dbReference type="ChEBI" id="CHEBI:15377"/>
        <dbReference type="ChEBI" id="CHEBI:16335"/>
        <dbReference type="ChEBI" id="CHEBI:57856"/>
        <dbReference type="ChEBI" id="CHEBI:58199"/>
        <dbReference type="EC" id="3.13.2.1"/>
    </reaction>
</comment>
<comment type="cofactor">
    <cofactor evidence="1">
        <name>NAD(+)</name>
        <dbReference type="ChEBI" id="CHEBI:57540"/>
    </cofactor>
    <text evidence="1">Binds 1 NAD(+) per subunit.</text>
</comment>
<comment type="pathway">
    <text evidence="1">Amino-acid biosynthesis; L-homocysteine biosynthesis; L-homocysteine from S-adenosyl-L-homocysteine: step 1/1.</text>
</comment>
<comment type="subcellular location">
    <subcellularLocation>
        <location evidence="1">Cytoplasm</location>
    </subcellularLocation>
</comment>
<comment type="similarity">
    <text evidence="1">Belongs to the adenosylhomocysteinase family.</text>
</comment>
<organism>
    <name type="scientific">Flavobacterium psychrophilum (strain ATCC 49511 / DSM 21280 / CIP 103535 / JIP02/86)</name>
    <dbReference type="NCBI Taxonomy" id="402612"/>
    <lineage>
        <taxon>Bacteria</taxon>
        <taxon>Pseudomonadati</taxon>
        <taxon>Bacteroidota</taxon>
        <taxon>Flavobacteriia</taxon>
        <taxon>Flavobacteriales</taxon>
        <taxon>Flavobacteriaceae</taxon>
        <taxon>Flavobacterium</taxon>
    </lineage>
</organism>
<gene>
    <name evidence="1" type="primary">ahcY</name>
    <name type="ordered locus">FP0189</name>
</gene>
<proteinExistence type="inferred from homology"/>